<dbReference type="EMBL" id="CP000388">
    <property type="protein sequence ID" value="ABG41758.1"/>
    <property type="molecule type" value="Genomic_DNA"/>
</dbReference>
<dbReference type="RefSeq" id="WP_011575988.1">
    <property type="nucleotide sequence ID" value="NC_008228.1"/>
</dbReference>
<dbReference type="SMR" id="Q15QT0"/>
<dbReference type="STRING" id="342610.Patl_3252"/>
<dbReference type="KEGG" id="pat:Patl_3252"/>
<dbReference type="eggNOG" id="COG2332">
    <property type="taxonomic scope" value="Bacteria"/>
</dbReference>
<dbReference type="HOGENOM" id="CLU_079503_1_0_6"/>
<dbReference type="OrthoDB" id="9793584at2"/>
<dbReference type="Proteomes" id="UP000001981">
    <property type="component" value="Chromosome"/>
</dbReference>
<dbReference type="GO" id="GO:0005886">
    <property type="term" value="C:plasma membrane"/>
    <property type="evidence" value="ECO:0007669"/>
    <property type="project" value="UniProtKB-SubCell"/>
</dbReference>
<dbReference type="GO" id="GO:0020037">
    <property type="term" value="F:heme binding"/>
    <property type="evidence" value="ECO:0007669"/>
    <property type="project" value="InterPro"/>
</dbReference>
<dbReference type="GO" id="GO:0046872">
    <property type="term" value="F:metal ion binding"/>
    <property type="evidence" value="ECO:0007669"/>
    <property type="project" value="UniProtKB-KW"/>
</dbReference>
<dbReference type="GO" id="GO:0017004">
    <property type="term" value="P:cytochrome complex assembly"/>
    <property type="evidence" value="ECO:0007669"/>
    <property type="project" value="UniProtKB-KW"/>
</dbReference>
<dbReference type="FunFam" id="2.40.50.140:FF:000104">
    <property type="entry name" value="Cytochrome c-type biogenesis protein CcmE"/>
    <property type="match status" value="1"/>
</dbReference>
<dbReference type="Gene3D" id="2.40.50.140">
    <property type="entry name" value="Nucleic acid-binding proteins"/>
    <property type="match status" value="1"/>
</dbReference>
<dbReference type="HAMAP" id="MF_01959">
    <property type="entry name" value="CcmE"/>
    <property type="match status" value="1"/>
</dbReference>
<dbReference type="InterPro" id="IPR004329">
    <property type="entry name" value="CcmE"/>
</dbReference>
<dbReference type="InterPro" id="IPR036127">
    <property type="entry name" value="CcmE-like_sf"/>
</dbReference>
<dbReference type="InterPro" id="IPR012340">
    <property type="entry name" value="NA-bd_OB-fold"/>
</dbReference>
<dbReference type="NCBIfam" id="NF009638">
    <property type="entry name" value="PRK13165.1"/>
    <property type="match status" value="1"/>
</dbReference>
<dbReference type="NCBIfam" id="NF009727">
    <property type="entry name" value="PRK13254.1-1"/>
    <property type="match status" value="1"/>
</dbReference>
<dbReference type="NCBIfam" id="NF009729">
    <property type="entry name" value="PRK13254.1-3"/>
    <property type="match status" value="1"/>
</dbReference>
<dbReference type="NCBIfam" id="NF009731">
    <property type="entry name" value="PRK13254.1-5"/>
    <property type="match status" value="1"/>
</dbReference>
<dbReference type="PANTHER" id="PTHR34128">
    <property type="entry name" value="CYTOCHROME C-TYPE BIOGENESIS PROTEIN CCME HOMOLOG, MITOCHONDRIAL"/>
    <property type="match status" value="1"/>
</dbReference>
<dbReference type="PANTHER" id="PTHR34128:SF2">
    <property type="entry name" value="CYTOCHROME C-TYPE BIOGENESIS PROTEIN CCME HOMOLOG, MITOCHONDRIAL"/>
    <property type="match status" value="1"/>
</dbReference>
<dbReference type="Pfam" id="PF03100">
    <property type="entry name" value="CcmE"/>
    <property type="match status" value="1"/>
</dbReference>
<dbReference type="SUPFAM" id="SSF82093">
    <property type="entry name" value="Heme chaperone CcmE"/>
    <property type="match status" value="1"/>
</dbReference>
<organism>
    <name type="scientific">Pseudoalteromonas atlantica (strain T6c / ATCC BAA-1087)</name>
    <dbReference type="NCBI Taxonomy" id="3042615"/>
    <lineage>
        <taxon>Bacteria</taxon>
        <taxon>Pseudomonadati</taxon>
        <taxon>Pseudomonadota</taxon>
        <taxon>Gammaproteobacteria</taxon>
        <taxon>Alteromonadales</taxon>
        <taxon>Alteromonadaceae</taxon>
        <taxon>Paraglaciecola</taxon>
    </lineage>
</organism>
<gene>
    <name evidence="1" type="primary">ccmE</name>
    <name evidence="1" type="synonym">cycJ</name>
    <name type="ordered locus">Patl_3252</name>
</gene>
<keyword id="KW-0997">Cell inner membrane</keyword>
<keyword id="KW-1003">Cell membrane</keyword>
<keyword id="KW-0201">Cytochrome c-type biogenesis</keyword>
<keyword id="KW-0349">Heme</keyword>
<keyword id="KW-0408">Iron</keyword>
<keyword id="KW-0472">Membrane</keyword>
<keyword id="KW-0479">Metal-binding</keyword>
<keyword id="KW-0735">Signal-anchor</keyword>
<keyword id="KW-0812">Transmembrane</keyword>
<keyword id="KW-1133">Transmembrane helix</keyword>
<proteinExistence type="inferred from homology"/>
<comment type="function">
    <text evidence="1">Heme chaperone required for the biogenesis of c-type cytochromes. Transiently binds heme delivered by CcmC and transfers the heme to apo-cytochromes in a process facilitated by CcmF and CcmH.</text>
</comment>
<comment type="subcellular location">
    <subcellularLocation>
        <location evidence="1">Cell inner membrane</location>
        <topology evidence="1">Single-pass type II membrane protein</topology>
        <orientation evidence="1">Periplasmic side</orientation>
    </subcellularLocation>
</comment>
<comment type="similarity">
    <text evidence="1">Belongs to the CcmE/CycJ family.</text>
</comment>
<accession>Q15QT0</accession>
<evidence type="ECO:0000255" key="1">
    <source>
        <dbReference type="HAMAP-Rule" id="MF_01959"/>
    </source>
</evidence>
<sequence length="164" mass="17858">MNPRRQKRLIVISAIVLVIGAAIGLMLYALSQNIDLFYTPSEVIDGKQIGQVTEVPQVGQRLRIGGMVVPGSVKRDNESLAVSFDLIDTGPIVTVSYQGLLPDLFREGQGIVATGVLTAENHIEAHEVLAKHDEEYMPPELAEKMKGIKHVKPEQAYSTPKVSG</sequence>
<name>CCME_PSEA6</name>
<feature type="chain" id="PRO_1000070829" description="Cytochrome c-type biogenesis protein CcmE">
    <location>
        <begin position="1"/>
        <end position="164"/>
    </location>
</feature>
<feature type="topological domain" description="Cytoplasmic" evidence="1">
    <location>
        <begin position="1"/>
        <end position="8"/>
    </location>
</feature>
<feature type="transmembrane region" description="Helical; Signal-anchor for type II membrane protein" evidence="1">
    <location>
        <begin position="9"/>
        <end position="29"/>
    </location>
</feature>
<feature type="topological domain" description="Periplasmic" evidence="1">
    <location>
        <begin position="30"/>
        <end position="164"/>
    </location>
</feature>
<feature type="binding site" description="covalent" evidence="1">
    <location>
        <position position="132"/>
    </location>
    <ligand>
        <name>heme</name>
        <dbReference type="ChEBI" id="CHEBI:30413"/>
    </ligand>
</feature>
<feature type="binding site" description="axial binding residue" evidence="1">
    <location>
        <position position="136"/>
    </location>
    <ligand>
        <name>heme</name>
        <dbReference type="ChEBI" id="CHEBI:30413"/>
    </ligand>
    <ligandPart>
        <name>Fe</name>
        <dbReference type="ChEBI" id="CHEBI:18248"/>
    </ligandPart>
</feature>
<protein>
    <recommendedName>
        <fullName evidence="1">Cytochrome c-type biogenesis protein CcmE</fullName>
    </recommendedName>
    <alternativeName>
        <fullName evidence="1">Cytochrome c maturation protein E</fullName>
    </alternativeName>
    <alternativeName>
        <fullName evidence="1">Heme chaperone CcmE</fullName>
    </alternativeName>
</protein>
<reference key="1">
    <citation type="submission" date="2006-06" db="EMBL/GenBank/DDBJ databases">
        <title>Complete sequence of Pseudoalteromonas atlantica T6c.</title>
        <authorList>
            <consortium name="US DOE Joint Genome Institute"/>
            <person name="Copeland A."/>
            <person name="Lucas S."/>
            <person name="Lapidus A."/>
            <person name="Barry K."/>
            <person name="Detter J.C."/>
            <person name="Glavina del Rio T."/>
            <person name="Hammon N."/>
            <person name="Israni S."/>
            <person name="Dalin E."/>
            <person name="Tice H."/>
            <person name="Pitluck S."/>
            <person name="Saunders E."/>
            <person name="Brettin T."/>
            <person name="Bruce D."/>
            <person name="Han C."/>
            <person name="Tapia R."/>
            <person name="Gilna P."/>
            <person name="Schmutz J."/>
            <person name="Larimer F."/>
            <person name="Land M."/>
            <person name="Hauser L."/>
            <person name="Kyrpides N."/>
            <person name="Kim E."/>
            <person name="Karls A.C."/>
            <person name="Bartlett D."/>
            <person name="Higgins B.P."/>
            <person name="Richardson P."/>
        </authorList>
    </citation>
    <scope>NUCLEOTIDE SEQUENCE [LARGE SCALE GENOMIC DNA]</scope>
    <source>
        <strain>T6c / ATCC BAA-1087</strain>
    </source>
</reference>